<comment type="function">
    <text evidence="1">Functions in the biosynthesis of branched-chain amino acids. Catalyzes the dehydration of (2R,3R)-2,3-dihydroxy-3-methylpentanoate (2,3-dihydroxy-3-methylvalerate) into 2-oxo-3-methylpentanoate (2-oxo-3-methylvalerate) and of (2R)-2,3-dihydroxy-3-methylbutanoate (2,3-dihydroxyisovalerate) into 2-oxo-3-methylbutanoate (2-oxoisovalerate), the penultimate precursor to L-isoleucine and L-valine, respectively.</text>
</comment>
<comment type="catalytic activity">
    <reaction evidence="1">
        <text>(2R)-2,3-dihydroxy-3-methylbutanoate = 3-methyl-2-oxobutanoate + H2O</text>
        <dbReference type="Rhea" id="RHEA:24809"/>
        <dbReference type="ChEBI" id="CHEBI:11851"/>
        <dbReference type="ChEBI" id="CHEBI:15377"/>
        <dbReference type="ChEBI" id="CHEBI:49072"/>
        <dbReference type="EC" id="4.2.1.9"/>
    </reaction>
    <physiologicalReaction direction="left-to-right" evidence="1">
        <dbReference type="Rhea" id="RHEA:24810"/>
    </physiologicalReaction>
</comment>
<comment type="catalytic activity">
    <reaction evidence="1">
        <text>(2R,3R)-2,3-dihydroxy-3-methylpentanoate = (S)-3-methyl-2-oxopentanoate + H2O</text>
        <dbReference type="Rhea" id="RHEA:27694"/>
        <dbReference type="ChEBI" id="CHEBI:15377"/>
        <dbReference type="ChEBI" id="CHEBI:35146"/>
        <dbReference type="ChEBI" id="CHEBI:49258"/>
        <dbReference type="EC" id="4.2.1.9"/>
    </reaction>
    <physiologicalReaction direction="left-to-right" evidence="1">
        <dbReference type="Rhea" id="RHEA:27695"/>
    </physiologicalReaction>
</comment>
<comment type="cofactor">
    <cofactor evidence="1">
        <name>[2Fe-2S] cluster</name>
        <dbReference type="ChEBI" id="CHEBI:190135"/>
    </cofactor>
    <text evidence="1">Binds 1 [2Fe-2S] cluster per subunit. This cluster acts as a Lewis acid cofactor.</text>
</comment>
<comment type="cofactor">
    <cofactor evidence="1">
        <name>Mg(2+)</name>
        <dbReference type="ChEBI" id="CHEBI:18420"/>
    </cofactor>
</comment>
<comment type="pathway">
    <text evidence="1">Amino-acid biosynthesis; L-isoleucine biosynthesis; L-isoleucine from 2-oxobutanoate: step 3/4.</text>
</comment>
<comment type="pathway">
    <text evidence="1">Amino-acid biosynthesis; L-valine biosynthesis; L-valine from pyruvate: step 3/4.</text>
</comment>
<comment type="subunit">
    <text evidence="1">Homodimer.</text>
</comment>
<comment type="similarity">
    <text evidence="1">Belongs to the IlvD/Edd family.</text>
</comment>
<name>ILVD_HISS1</name>
<protein>
    <recommendedName>
        <fullName evidence="1">Dihydroxy-acid dehydratase</fullName>
        <shortName evidence="1">DAD</shortName>
        <ecNumber evidence="1">4.2.1.9</ecNumber>
    </recommendedName>
</protein>
<sequence>MPKLRSATSTQGRNMAGARALWRATGMKENDFGKPIIAVVNSFTQFVPGHVHLKDMGQLVATEIEKFGGVAKEFNTIAVDDGIAMGHGGMLYSLPSRDLIADSVEYMVNAHCADAMVCISNCDKITPGMLMAALRLNIPTVFVSGGPMEAGKTKLSDQIIKLDLVDAMIQGANPNVSDDVSEQIERSACPTCGSCSGMFTANSMNCLTEALGLSLPGNGSCLATHADRKQLFLAAGKQIVELCKRYYEQDDTSVLPRSIATKEAFDNAMSLDIAMGGSTNTVLHLLAAAQEAEVNFTMADIDRLSRVVPCLSKVAPNTQKYHMEDVHRAGGIMAILGELDRAGLLNSQTRTILGMSIGEQIAKYDIKLTQDKAIHKFFRAGPAGIRTTQAFLQDCRWDTVDDDRENGCIRSKEFAYSQDGGLAMLSGNIALDGCIVKTAGVDESILKFSGKAIVFESQEDAVSGILGGKVQAGHVVVIRYEGPKGGPGMQEMLYPTSYLKSMGLGKACALLTDGRFSGGTSGLSIGHCSPEAAAGGLIGVVKDGDIIEIDIPNRRIELMVSEEELAERRAEQDKLGWKPANRQREVSFALKVYGYFATSADKGAVRDKTKI</sequence>
<accession>Q0I1F1</accession>
<dbReference type="EC" id="4.2.1.9" evidence="1"/>
<dbReference type="EMBL" id="CP000436">
    <property type="protein sequence ID" value="ABI24620.1"/>
    <property type="molecule type" value="Genomic_DNA"/>
</dbReference>
<dbReference type="SMR" id="Q0I1F1"/>
<dbReference type="KEGG" id="hso:HS_0342"/>
<dbReference type="eggNOG" id="COG0129">
    <property type="taxonomic scope" value="Bacteria"/>
</dbReference>
<dbReference type="HOGENOM" id="CLU_014271_4_3_6"/>
<dbReference type="UniPathway" id="UPA00047">
    <property type="reaction ID" value="UER00057"/>
</dbReference>
<dbReference type="UniPathway" id="UPA00049">
    <property type="reaction ID" value="UER00061"/>
</dbReference>
<dbReference type="GO" id="GO:0005829">
    <property type="term" value="C:cytosol"/>
    <property type="evidence" value="ECO:0007669"/>
    <property type="project" value="TreeGrafter"/>
</dbReference>
<dbReference type="GO" id="GO:0051537">
    <property type="term" value="F:2 iron, 2 sulfur cluster binding"/>
    <property type="evidence" value="ECO:0007669"/>
    <property type="project" value="UniProtKB-UniRule"/>
</dbReference>
<dbReference type="GO" id="GO:0004160">
    <property type="term" value="F:dihydroxy-acid dehydratase activity"/>
    <property type="evidence" value="ECO:0007669"/>
    <property type="project" value="UniProtKB-UniRule"/>
</dbReference>
<dbReference type="GO" id="GO:0000287">
    <property type="term" value="F:magnesium ion binding"/>
    <property type="evidence" value="ECO:0007669"/>
    <property type="project" value="UniProtKB-UniRule"/>
</dbReference>
<dbReference type="GO" id="GO:0009097">
    <property type="term" value="P:isoleucine biosynthetic process"/>
    <property type="evidence" value="ECO:0007669"/>
    <property type="project" value="UniProtKB-UniRule"/>
</dbReference>
<dbReference type="GO" id="GO:0009099">
    <property type="term" value="P:L-valine biosynthetic process"/>
    <property type="evidence" value="ECO:0007669"/>
    <property type="project" value="UniProtKB-UniRule"/>
</dbReference>
<dbReference type="FunFam" id="3.50.30.80:FF:000001">
    <property type="entry name" value="Dihydroxy-acid dehydratase"/>
    <property type="match status" value="1"/>
</dbReference>
<dbReference type="Gene3D" id="3.50.30.80">
    <property type="entry name" value="IlvD/EDD C-terminal domain-like"/>
    <property type="match status" value="1"/>
</dbReference>
<dbReference type="HAMAP" id="MF_00012">
    <property type="entry name" value="IlvD"/>
    <property type="match status" value="1"/>
</dbReference>
<dbReference type="InterPro" id="IPR042096">
    <property type="entry name" value="Dihydro-acid_dehy_C"/>
</dbReference>
<dbReference type="InterPro" id="IPR004404">
    <property type="entry name" value="DihydroxyA_deHydtase"/>
</dbReference>
<dbReference type="InterPro" id="IPR020558">
    <property type="entry name" value="DiOHA_6PGluconate_deHydtase_CS"/>
</dbReference>
<dbReference type="InterPro" id="IPR056740">
    <property type="entry name" value="ILV_EDD_C"/>
</dbReference>
<dbReference type="InterPro" id="IPR000581">
    <property type="entry name" value="ILV_EDD_N"/>
</dbReference>
<dbReference type="InterPro" id="IPR037237">
    <property type="entry name" value="IlvD/EDD_N"/>
</dbReference>
<dbReference type="NCBIfam" id="TIGR00110">
    <property type="entry name" value="ilvD"/>
    <property type="match status" value="1"/>
</dbReference>
<dbReference type="NCBIfam" id="NF009103">
    <property type="entry name" value="PRK12448.1"/>
    <property type="match status" value="1"/>
</dbReference>
<dbReference type="PANTHER" id="PTHR43661">
    <property type="entry name" value="D-XYLONATE DEHYDRATASE"/>
    <property type="match status" value="1"/>
</dbReference>
<dbReference type="PANTHER" id="PTHR43661:SF3">
    <property type="entry name" value="D-XYLONATE DEHYDRATASE YAGF-RELATED"/>
    <property type="match status" value="1"/>
</dbReference>
<dbReference type="Pfam" id="PF24877">
    <property type="entry name" value="ILV_EDD_C"/>
    <property type="match status" value="1"/>
</dbReference>
<dbReference type="Pfam" id="PF00920">
    <property type="entry name" value="ILVD_EDD_N"/>
    <property type="match status" value="1"/>
</dbReference>
<dbReference type="SUPFAM" id="SSF143975">
    <property type="entry name" value="IlvD/EDD N-terminal domain-like"/>
    <property type="match status" value="1"/>
</dbReference>
<dbReference type="SUPFAM" id="SSF52016">
    <property type="entry name" value="LeuD/IlvD-like"/>
    <property type="match status" value="1"/>
</dbReference>
<dbReference type="PROSITE" id="PS00886">
    <property type="entry name" value="ILVD_EDD_1"/>
    <property type="match status" value="1"/>
</dbReference>
<dbReference type="PROSITE" id="PS00887">
    <property type="entry name" value="ILVD_EDD_2"/>
    <property type="match status" value="1"/>
</dbReference>
<feature type="chain" id="PRO_1000000989" description="Dihydroxy-acid dehydratase">
    <location>
        <begin position="1"/>
        <end position="611"/>
    </location>
</feature>
<feature type="active site" description="Proton acceptor" evidence="1">
    <location>
        <position position="517"/>
    </location>
</feature>
<feature type="binding site" evidence="1">
    <location>
        <position position="81"/>
    </location>
    <ligand>
        <name>Mg(2+)</name>
        <dbReference type="ChEBI" id="CHEBI:18420"/>
    </ligand>
</feature>
<feature type="binding site" evidence="1">
    <location>
        <position position="122"/>
    </location>
    <ligand>
        <name>[2Fe-2S] cluster</name>
        <dbReference type="ChEBI" id="CHEBI:190135"/>
    </ligand>
</feature>
<feature type="binding site" evidence="1">
    <location>
        <position position="123"/>
    </location>
    <ligand>
        <name>Mg(2+)</name>
        <dbReference type="ChEBI" id="CHEBI:18420"/>
    </ligand>
</feature>
<feature type="binding site" description="via carbamate group" evidence="1">
    <location>
        <position position="124"/>
    </location>
    <ligand>
        <name>Mg(2+)</name>
        <dbReference type="ChEBI" id="CHEBI:18420"/>
    </ligand>
</feature>
<feature type="binding site" evidence="1">
    <location>
        <position position="195"/>
    </location>
    <ligand>
        <name>[2Fe-2S] cluster</name>
        <dbReference type="ChEBI" id="CHEBI:190135"/>
    </ligand>
</feature>
<feature type="binding site" evidence="1">
    <location>
        <position position="491"/>
    </location>
    <ligand>
        <name>Mg(2+)</name>
        <dbReference type="ChEBI" id="CHEBI:18420"/>
    </ligand>
</feature>
<feature type="modified residue" description="N6-carboxylysine" evidence="1">
    <location>
        <position position="124"/>
    </location>
</feature>
<organism>
    <name type="scientific">Histophilus somni (strain 129Pt)</name>
    <name type="common">Haemophilus somnus</name>
    <dbReference type="NCBI Taxonomy" id="205914"/>
    <lineage>
        <taxon>Bacteria</taxon>
        <taxon>Pseudomonadati</taxon>
        <taxon>Pseudomonadota</taxon>
        <taxon>Gammaproteobacteria</taxon>
        <taxon>Pasteurellales</taxon>
        <taxon>Pasteurellaceae</taxon>
        <taxon>Histophilus</taxon>
    </lineage>
</organism>
<gene>
    <name evidence="1" type="primary">ilvD</name>
    <name type="ordered locus">HS_0342</name>
</gene>
<keyword id="KW-0001">2Fe-2S</keyword>
<keyword id="KW-0028">Amino-acid biosynthesis</keyword>
<keyword id="KW-0100">Branched-chain amino acid biosynthesis</keyword>
<keyword id="KW-0408">Iron</keyword>
<keyword id="KW-0411">Iron-sulfur</keyword>
<keyword id="KW-0456">Lyase</keyword>
<keyword id="KW-0460">Magnesium</keyword>
<keyword id="KW-0479">Metal-binding</keyword>
<proteinExistence type="inferred from homology"/>
<evidence type="ECO:0000255" key="1">
    <source>
        <dbReference type="HAMAP-Rule" id="MF_00012"/>
    </source>
</evidence>
<reference key="1">
    <citation type="journal article" date="2007" name="J. Bacteriol.">
        <title>Complete genome sequence of Haemophilus somnus (Histophilus somni) strain 129Pt and comparison to Haemophilus ducreyi 35000HP and Haemophilus influenzae Rd.</title>
        <authorList>
            <person name="Challacombe J.F."/>
            <person name="Duncan A.J."/>
            <person name="Brettin T.S."/>
            <person name="Bruce D."/>
            <person name="Chertkov O."/>
            <person name="Detter J.C."/>
            <person name="Han C.S."/>
            <person name="Misra M."/>
            <person name="Richardson P."/>
            <person name="Tapia R."/>
            <person name="Thayer N."/>
            <person name="Xie G."/>
            <person name="Inzana T.J."/>
        </authorList>
    </citation>
    <scope>NUCLEOTIDE SEQUENCE [LARGE SCALE GENOMIC DNA]</scope>
    <source>
        <strain>129Pt</strain>
    </source>
</reference>